<evidence type="ECO:0000255" key="1">
    <source>
        <dbReference type="HAMAP-Rule" id="MF_00378"/>
    </source>
</evidence>
<accession>Q4K6V9</accession>
<reference key="1">
    <citation type="journal article" date="2005" name="Nat. Biotechnol.">
        <title>Complete genome sequence of the plant commensal Pseudomonas fluorescens Pf-5.</title>
        <authorList>
            <person name="Paulsen I.T."/>
            <person name="Press C.M."/>
            <person name="Ravel J."/>
            <person name="Kobayashi D.Y."/>
            <person name="Myers G.S.A."/>
            <person name="Mavrodi D.V."/>
            <person name="DeBoy R.T."/>
            <person name="Seshadri R."/>
            <person name="Ren Q."/>
            <person name="Madupu R."/>
            <person name="Dodson R.J."/>
            <person name="Durkin A.S."/>
            <person name="Brinkac L.M."/>
            <person name="Daugherty S.C."/>
            <person name="Sullivan S.A."/>
            <person name="Rosovitz M.J."/>
            <person name="Gwinn M.L."/>
            <person name="Zhou L."/>
            <person name="Schneider D.J."/>
            <person name="Cartinhour S.W."/>
            <person name="Nelson W.C."/>
            <person name="Weidman J."/>
            <person name="Watkins K."/>
            <person name="Tran K."/>
            <person name="Khouri H."/>
            <person name="Pierson E.A."/>
            <person name="Pierson L.S. III"/>
            <person name="Thomashow L.S."/>
            <person name="Loper J.E."/>
        </authorList>
    </citation>
    <scope>NUCLEOTIDE SEQUENCE [LARGE SCALE GENOMIC DNA]</scope>
    <source>
        <strain>ATCC BAA-477 / NRRL B-23932 / Pf-5</strain>
    </source>
</reference>
<organism>
    <name type="scientific">Pseudomonas fluorescens (strain ATCC BAA-477 / NRRL B-23932 / Pf-5)</name>
    <dbReference type="NCBI Taxonomy" id="220664"/>
    <lineage>
        <taxon>Bacteria</taxon>
        <taxon>Pseudomonadati</taxon>
        <taxon>Pseudomonadota</taxon>
        <taxon>Gammaproteobacteria</taxon>
        <taxon>Pseudomonadales</taxon>
        <taxon>Pseudomonadaceae</taxon>
        <taxon>Pseudomonas</taxon>
    </lineage>
</organism>
<proteinExistence type="inferred from homology"/>
<sequence length="459" mass="51063">MIKDPFARLGLDREVLTVTQLNGRARVLLEDVFSNIWVEGEISNLARPASGHVYFTLKDSGAQVRCALFRQNAARVRQALKDGLAVKVRGKVSLFEGRGDYQLILDTVEPAGDGALRLAFDALKDKLSAEGLFSAERKVPLPAHPQRIGIISSPTGAVIRDIISVFRRRAPQVVLTLIPTAVQGREATAQIVRALQLADARGFDALILARGGGSLEDLWCFNEEAVARAVDACVTPIVSAVGHETDVSISDFVADVRAPTPSAAAELLAPDSSDLQRRVDNLHRRLVMRMRDRLVRDRLRLDGLARRLRHPGERLRQQAQRLDDLDMRLRRAFERSLNTRRERLIRLETRLGAQHPGRQLALLRQRLDSLAERLPRAMREGLKGRRLQLHSQMQTLHVVSPLATLGRGYSILLDDRGQAIRSAGQTRPGQRLSARLGEGELQVRVEDNHLTPVTLSLLD</sequence>
<protein>
    <recommendedName>
        <fullName evidence="1">Exodeoxyribonuclease 7 large subunit</fullName>
        <ecNumber evidence="1">3.1.11.6</ecNumber>
    </recommendedName>
    <alternativeName>
        <fullName evidence="1">Exodeoxyribonuclease VII large subunit</fullName>
        <shortName evidence="1">Exonuclease VII large subunit</shortName>
    </alternativeName>
</protein>
<dbReference type="EC" id="3.1.11.6" evidence="1"/>
<dbReference type="EMBL" id="CP000076">
    <property type="protein sequence ID" value="AAY94173.1"/>
    <property type="molecule type" value="Genomic_DNA"/>
</dbReference>
<dbReference type="RefSeq" id="WP_011063197.1">
    <property type="nucleotide sequence ID" value="NC_004129.6"/>
</dbReference>
<dbReference type="SMR" id="Q4K6V9"/>
<dbReference type="STRING" id="220664.PFL_4944"/>
<dbReference type="GeneID" id="57477926"/>
<dbReference type="KEGG" id="pfl:PFL_4944"/>
<dbReference type="PATRIC" id="fig|220664.5.peg.5065"/>
<dbReference type="eggNOG" id="COG1570">
    <property type="taxonomic scope" value="Bacteria"/>
</dbReference>
<dbReference type="HOGENOM" id="CLU_023625_3_1_6"/>
<dbReference type="Proteomes" id="UP000008540">
    <property type="component" value="Chromosome"/>
</dbReference>
<dbReference type="GO" id="GO:0005737">
    <property type="term" value="C:cytoplasm"/>
    <property type="evidence" value="ECO:0007669"/>
    <property type="project" value="UniProtKB-SubCell"/>
</dbReference>
<dbReference type="GO" id="GO:0009318">
    <property type="term" value="C:exodeoxyribonuclease VII complex"/>
    <property type="evidence" value="ECO:0007669"/>
    <property type="project" value="InterPro"/>
</dbReference>
<dbReference type="GO" id="GO:0008855">
    <property type="term" value="F:exodeoxyribonuclease VII activity"/>
    <property type="evidence" value="ECO:0007669"/>
    <property type="project" value="UniProtKB-UniRule"/>
</dbReference>
<dbReference type="GO" id="GO:0003676">
    <property type="term" value="F:nucleic acid binding"/>
    <property type="evidence" value="ECO:0007669"/>
    <property type="project" value="InterPro"/>
</dbReference>
<dbReference type="GO" id="GO:0006308">
    <property type="term" value="P:DNA catabolic process"/>
    <property type="evidence" value="ECO:0007669"/>
    <property type="project" value="UniProtKB-UniRule"/>
</dbReference>
<dbReference type="CDD" id="cd04489">
    <property type="entry name" value="ExoVII_LU_OBF"/>
    <property type="match status" value="1"/>
</dbReference>
<dbReference type="Gene3D" id="2.40.50.1010">
    <property type="match status" value="1"/>
</dbReference>
<dbReference type="HAMAP" id="MF_00378">
    <property type="entry name" value="Exonuc_7_L"/>
    <property type="match status" value="1"/>
</dbReference>
<dbReference type="InterPro" id="IPR003753">
    <property type="entry name" value="Exonuc_VII_L"/>
</dbReference>
<dbReference type="InterPro" id="IPR020579">
    <property type="entry name" value="Exonuc_VII_lsu_C"/>
</dbReference>
<dbReference type="InterPro" id="IPR025824">
    <property type="entry name" value="OB-fold_nuc-bd_dom"/>
</dbReference>
<dbReference type="NCBIfam" id="TIGR00237">
    <property type="entry name" value="xseA"/>
    <property type="match status" value="1"/>
</dbReference>
<dbReference type="PANTHER" id="PTHR30008">
    <property type="entry name" value="EXODEOXYRIBONUCLEASE 7 LARGE SUBUNIT"/>
    <property type="match status" value="1"/>
</dbReference>
<dbReference type="PANTHER" id="PTHR30008:SF0">
    <property type="entry name" value="EXODEOXYRIBONUCLEASE 7 LARGE SUBUNIT"/>
    <property type="match status" value="1"/>
</dbReference>
<dbReference type="Pfam" id="PF02601">
    <property type="entry name" value="Exonuc_VII_L"/>
    <property type="match status" value="1"/>
</dbReference>
<dbReference type="Pfam" id="PF13742">
    <property type="entry name" value="tRNA_anti_2"/>
    <property type="match status" value="1"/>
</dbReference>
<feature type="chain" id="PRO_0000273676" description="Exodeoxyribonuclease 7 large subunit">
    <location>
        <begin position="1"/>
        <end position="459"/>
    </location>
</feature>
<comment type="function">
    <text evidence="1">Bidirectionally degrades single-stranded DNA into large acid-insoluble oligonucleotides, which are then degraded further into small acid-soluble oligonucleotides.</text>
</comment>
<comment type="catalytic activity">
    <reaction evidence="1">
        <text>Exonucleolytic cleavage in either 5'- to 3'- or 3'- to 5'-direction to yield nucleoside 5'-phosphates.</text>
        <dbReference type="EC" id="3.1.11.6"/>
    </reaction>
</comment>
<comment type="subunit">
    <text evidence="1">Heterooligomer composed of large and small subunits.</text>
</comment>
<comment type="subcellular location">
    <subcellularLocation>
        <location evidence="1">Cytoplasm</location>
    </subcellularLocation>
</comment>
<comment type="similarity">
    <text evidence="1">Belongs to the XseA family.</text>
</comment>
<name>EX7L_PSEF5</name>
<gene>
    <name evidence="1" type="primary">xseA</name>
    <name type="ordered locus">PFL_4944</name>
</gene>
<keyword id="KW-0963">Cytoplasm</keyword>
<keyword id="KW-0269">Exonuclease</keyword>
<keyword id="KW-0378">Hydrolase</keyword>
<keyword id="KW-0540">Nuclease</keyword>